<comment type="function">
    <text evidence="3 5">Acts as a molecular chaperone for neuroendocrine convertase amon/PC2, preventing its premature activation in the regulated secretory pathway (PubMed:10749852). Binds to inactive amon in the endoplasmic reticulum and facilitates its transport from there to later compartments of the secretory pathway where it is proteolytically matured and activated (By similarity). Also required for cleavage of amon (PubMed:10749852).</text>
</comment>
<comment type="subunit">
    <text evidence="2">Interacts with amon/PC2 early in the secretory pathway. Dissociation occurs at later stages.</text>
</comment>
<comment type="subcellular location">
    <subcellularLocation>
        <location evidence="1">Secreted</location>
    </subcellularLocation>
</comment>
<comment type="alternative products">
    <event type="alternative splicing"/>
    <isoform>
        <id>Q59E04-1</id>
        <name evidence="10">B</name>
        <sequence type="displayed"/>
    </isoform>
    <isoform>
        <id>Q59E04-2</id>
        <name evidence="10">A</name>
        <sequence type="described" ref="VSP_061793"/>
    </isoform>
</comment>
<comment type="similarity">
    <text evidence="7">Belongs to the 7B2 family.</text>
</comment>
<comment type="sequence caution" evidence="7">
    <conflict type="erroneous initiation">
        <sequence resource="EMBL-CDS" id="ADQ89796"/>
    </conflict>
    <text>Extended N-terminus.</text>
</comment>
<dbReference type="EMBL" id="AE014297">
    <property type="protein sequence ID" value="AAX52936.1"/>
    <property type="molecule type" value="Genomic_DNA"/>
</dbReference>
<dbReference type="EMBL" id="AE014297">
    <property type="protein sequence ID" value="AAF52036.3"/>
    <property type="molecule type" value="Genomic_DNA"/>
</dbReference>
<dbReference type="EMBL" id="AY119453">
    <property type="protein sequence ID" value="AAM50107.1"/>
    <property type="molecule type" value="mRNA"/>
</dbReference>
<dbReference type="EMBL" id="BT125782">
    <property type="protein sequence ID" value="ADQ89796.1"/>
    <property type="status" value="ALT_INIT"/>
    <property type="molecule type" value="mRNA"/>
</dbReference>
<dbReference type="EMBL" id="AJ271974">
    <property type="protein sequence ID" value="CAB72934.1"/>
    <property type="molecule type" value="Genomic_DNA"/>
</dbReference>
<dbReference type="RefSeq" id="NP_001014608.1">
    <molecule id="Q59E04-1"/>
    <property type="nucleotide sequence ID" value="NM_001014608.2"/>
</dbReference>
<dbReference type="RefSeq" id="NP_620471.3">
    <molecule id="Q59E04-2"/>
    <property type="nucleotide sequence ID" value="NM_138986.4"/>
</dbReference>
<dbReference type="FunCoup" id="Q59E04">
    <property type="interactions" value="87"/>
</dbReference>
<dbReference type="IntAct" id="Q59E04">
    <property type="interactions" value="2"/>
</dbReference>
<dbReference type="STRING" id="7227.FBpp0100150"/>
<dbReference type="MEROPS" id="I21.001"/>
<dbReference type="PaxDb" id="7227-FBpp0100150"/>
<dbReference type="DNASU" id="40644"/>
<dbReference type="EnsemblMetazoa" id="FBtr0078789">
    <molecule id="Q59E04-2"/>
    <property type="protein sequence ID" value="FBpp0078435"/>
    <property type="gene ID" value="FBgn0041707"/>
</dbReference>
<dbReference type="EnsemblMetazoa" id="FBtr0301640">
    <molecule id="Q59E04-1"/>
    <property type="protein sequence ID" value="FBpp0100150"/>
    <property type="gene ID" value="FBgn0041707"/>
</dbReference>
<dbReference type="GeneID" id="40644"/>
<dbReference type="KEGG" id="dme:Dmel_CG1168"/>
<dbReference type="UCSC" id="CG1168-RA">
    <property type="organism name" value="d. melanogaster"/>
</dbReference>
<dbReference type="UCSC" id="CG1168-RB">
    <molecule id="Q59E04-1"/>
    <property type="organism name" value="d. melanogaster"/>
</dbReference>
<dbReference type="AGR" id="FB:FBgn0041707"/>
<dbReference type="CTD" id="40644"/>
<dbReference type="FlyBase" id="FBgn0041707">
    <property type="gene designation" value="7B2"/>
</dbReference>
<dbReference type="VEuPathDB" id="VectorBase:FBgn0041707"/>
<dbReference type="eggNOG" id="KOG4187">
    <property type="taxonomic scope" value="Eukaryota"/>
</dbReference>
<dbReference type="GeneTree" id="ENSGT00390000009816"/>
<dbReference type="HOGENOM" id="CLU_080823_0_0_1"/>
<dbReference type="InParanoid" id="Q59E04"/>
<dbReference type="OMA" id="CTCDSEH"/>
<dbReference type="OrthoDB" id="9922675at2759"/>
<dbReference type="PhylomeDB" id="Q59E04"/>
<dbReference type="BioGRID-ORCS" id="40644">
    <property type="hits" value="0 hits in 1 CRISPR screen"/>
</dbReference>
<dbReference type="GenomeRNAi" id="40644"/>
<dbReference type="PRO" id="PR:Q59E04"/>
<dbReference type="Proteomes" id="UP000000803">
    <property type="component" value="Chromosome 3R"/>
</dbReference>
<dbReference type="Bgee" id="FBgn0041707">
    <property type="expression patterns" value="Expressed in adult middle midgut class II enteroendocrine cell in adult midgut (Drosophila) and 172 other cell types or tissues"/>
</dbReference>
<dbReference type="ExpressionAtlas" id="Q59E04">
    <property type="expression patterns" value="baseline and differential"/>
</dbReference>
<dbReference type="GO" id="GO:0005576">
    <property type="term" value="C:extracellular region"/>
    <property type="evidence" value="ECO:0007669"/>
    <property type="project" value="UniProtKB-SubCell"/>
</dbReference>
<dbReference type="GO" id="GO:0030141">
    <property type="term" value="C:secretory granule"/>
    <property type="evidence" value="ECO:0007669"/>
    <property type="project" value="InterPro"/>
</dbReference>
<dbReference type="GO" id="GO:0030234">
    <property type="term" value="F:enzyme regulator activity"/>
    <property type="evidence" value="ECO:0000318"/>
    <property type="project" value="GO_Central"/>
</dbReference>
<dbReference type="GO" id="GO:0016504">
    <property type="term" value="F:peptidase activator activity"/>
    <property type="evidence" value="ECO:0000314"/>
    <property type="project" value="FlyBase"/>
</dbReference>
<dbReference type="GO" id="GO:0007218">
    <property type="term" value="P:neuropeptide signaling pathway"/>
    <property type="evidence" value="ECO:0007669"/>
    <property type="project" value="InterPro"/>
</dbReference>
<dbReference type="GO" id="GO:0045862">
    <property type="term" value="P:positive regulation of proteolysis"/>
    <property type="evidence" value="ECO:0000314"/>
    <property type="project" value="FlyBase"/>
</dbReference>
<dbReference type="GO" id="GO:0046883">
    <property type="term" value="P:regulation of hormone secretion"/>
    <property type="evidence" value="ECO:0000318"/>
    <property type="project" value="GO_Central"/>
</dbReference>
<dbReference type="InterPro" id="IPR007945">
    <property type="entry name" value="Secretogranin_V"/>
</dbReference>
<dbReference type="PANTHER" id="PTHR12738">
    <property type="entry name" value="NEUROENDOCRINE PROTEIN 7B2"/>
    <property type="match status" value="1"/>
</dbReference>
<dbReference type="PANTHER" id="PTHR12738:SF0">
    <property type="entry name" value="NEUROENDOCRINE PROTEIN 7B2"/>
    <property type="match status" value="1"/>
</dbReference>
<dbReference type="Pfam" id="PF05281">
    <property type="entry name" value="Secretogranin_V"/>
    <property type="match status" value="1"/>
</dbReference>
<name>7B2_DROME</name>
<proteinExistence type="evidence at transcript level"/>
<accession>Q59E04</accession>
<accession>E4NKI5</accession>
<accession>Q9N9Z7</accession>
<accession>Q9VNB0</accession>
<organism evidence="11">
    <name type="scientific">Drosophila melanogaster</name>
    <name type="common">Fruit fly</name>
    <dbReference type="NCBI Taxonomy" id="7227"/>
    <lineage>
        <taxon>Eukaryota</taxon>
        <taxon>Metazoa</taxon>
        <taxon>Ecdysozoa</taxon>
        <taxon>Arthropoda</taxon>
        <taxon>Hexapoda</taxon>
        <taxon>Insecta</taxon>
        <taxon>Pterygota</taxon>
        <taxon>Neoptera</taxon>
        <taxon>Endopterygota</taxon>
        <taxon>Diptera</taxon>
        <taxon>Brachycera</taxon>
        <taxon>Muscomorpha</taxon>
        <taxon>Ephydroidea</taxon>
        <taxon>Drosophilidae</taxon>
        <taxon>Drosophila</taxon>
        <taxon>Sophophora</taxon>
    </lineage>
</organism>
<evidence type="ECO:0000250" key="1">
    <source>
        <dbReference type="UniProtKB" id="P01165"/>
    </source>
</evidence>
<evidence type="ECO:0000250" key="2">
    <source>
        <dbReference type="UniProtKB" id="P05408"/>
    </source>
</evidence>
<evidence type="ECO:0000250" key="3">
    <source>
        <dbReference type="UniProtKB" id="P12961"/>
    </source>
</evidence>
<evidence type="ECO:0000250" key="4">
    <source>
        <dbReference type="UniProtKB" id="P18844"/>
    </source>
</evidence>
<evidence type="ECO:0000269" key="5">
    <source>
    </source>
</evidence>
<evidence type="ECO:0000303" key="6">
    <source>
    </source>
</evidence>
<evidence type="ECO:0000305" key="7"/>
<evidence type="ECO:0000312" key="8">
    <source>
        <dbReference type="EMBL" id="AAM50107.1"/>
    </source>
</evidence>
<evidence type="ECO:0000312" key="9">
    <source>
        <dbReference type="EMBL" id="ADQ89796.1"/>
    </source>
</evidence>
<evidence type="ECO:0000312" key="10">
    <source>
        <dbReference type="FlyBase" id="FBgn0041707"/>
    </source>
</evidence>
<evidence type="ECO:0000312" key="11">
    <source>
        <dbReference type="Proteomes" id="UP000000803"/>
    </source>
</evidence>
<sequence length="276" mass="29995">MLFRSQTHVFPGVYMMVAMLVVALSGYQVQSYSAKDILADVLMTDLLNRMDKDMQVGYYDVGNEAAAGSKDNVDLVSRSEYARLCDGGSDCILQSGSASGAASHPSLRDDEFLQHSSLWGHQFISGGMGEGPNRYPTIVKNDAGLPAYCNPPNPCPEGYDMETQGGSCIVDFENTAIFSREFQAAQDCTCDNEHMFDCSEQDSADVGGDKGDLNSAVEQYIMQMGQENSLNNVNSLAKKAGYPVMPDPRLDDAVINPFLQGDRLPIAAKKGNLLFH</sequence>
<feature type="signal peptide" evidence="7">
    <location>
        <begin position="1"/>
        <end status="unknown"/>
    </location>
</feature>
<feature type="chain" id="PRO_0000457563" description="Neuroendocrine protein 7B2">
    <location>
        <begin status="unknown"/>
        <end position="276"/>
    </location>
</feature>
<feature type="disulfide bond" evidence="4">
    <location>
        <begin position="155"/>
        <end position="168"/>
    </location>
</feature>
<feature type="splice variant" id="VSP_061793" description="In isoform A." evidence="7">
    <original>THVFPG</original>
    <variation>S</variation>
    <location>
        <begin position="7"/>
        <end position="12"/>
    </location>
</feature>
<keyword id="KW-0025">Alternative splicing</keyword>
<keyword id="KW-0143">Chaperone</keyword>
<keyword id="KW-1015">Disulfide bond</keyword>
<keyword id="KW-1185">Reference proteome</keyword>
<keyword id="KW-0964">Secreted</keyword>
<keyword id="KW-0732">Signal</keyword>
<keyword id="KW-0813">Transport</keyword>
<protein>
    <recommendedName>
        <fullName evidence="6">Neuroendocrine protein 7B2</fullName>
    </recommendedName>
</protein>
<gene>
    <name evidence="6 10" type="primary">7B2</name>
    <name evidence="10" type="ORF">CG1168</name>
</gene>
<reference evidence="11" key="1">
    <citation type="journal article" date="2000" name="Science">
        <title>The genome sequence of Drosophila melanogaster.</title>
        <authorList>
            <person name="Adams M.D."/>
            <person name="Celniker S.E."/>
            <person name="Holt R.A."/>
            <person name="Evans C.A."/>
            <person name="Gocayne J.D."/>
            <person name="Amanatides P.G."/>
            <person name="Scherer S.E."/>
            <person name="Li P.W."/>
            <person name="Hoskins R.A."/>
            <person name="Galle R.F."/>
            <person name="George R.A."/>
            <person name="Lewis S.E."/>
            <person name="Richards S."/>
            <person name="Ashburner M."/>
            <person name="Henderson S.N."/>
            <person name="Sutton G.G."/>
            <person name="Wortman J.R."/>
            <person name="Yandell M.D."/>
            <person name="Zhang Q."/>
            <person name="Chen L.X."/>
            <person name="Brandon R.C."/>
            <person name="Rogers Y.-H.C."/>
            <person name="Blazej R.G."/>
            <person name="Champe M."/>
            <person name="Pfeiffer B.D."/>
            <person name="Wan K.H."/>
            <person name="Doyle C."/>
            <person name="Baxter E.G."/>
            <person name="Helt G."/>
            <person name="Nelson C.R."/>
            <person name="Miklos G.L.G."/>
            <person name="Abril J.F."/>
            <person name="Agbayani A."/>
            <person name="An H.-J."/>
            <person name="Andrews-Pfannkoch C."/>
            <person name="Baldwin D."/>
            <person name="Ballew R.M."/>
            <person name="Basu A."/>
            <person name="Baxendale J."/>
            <person name="Bayraktaroglu L."/>
            <person name="Beasley E.M."/>
            <person name="Beeson K.Y."/>
            <person name="Benos P.V."/>
            <person name="Berman B.P."/>
            <person name="Bhandari D."/>
            <person name="Bolshakov S."/>
            <person name="Borkova D."/>
            <person name="Botchan M.R."/>
            <person name="Bouck J."/>
            <person name="Brokstein P."/>
            <person name="Brottier P."/>
            <person name="Burtis K.C."/>
            <person name="Busam D.A."/>
            <person name="Butler H."/>
            <person name="Cadieu E."/>
            <person name="Center A."/>
            <person name="Chandra I."/>
            <person name="Cherry J.M."/>
            <person name="Cawley S."/>
            <person name="Dahlke C."/>
            <person name="Davenport L.B."/>
            <person name="Davies P."/>
            <person name="de Pablos B."/>
            <person name="Delcher A."/>
            <person name="Deng Z."/>
            <person name="Mays A.D."/>
            <person name="Dew I."/>
            <person name="Dietz S.M."/>
            <person name="Dodson K."/>
            <person name="Doup L.E."/>
            <person name="Downes M."/>
            <person name="Dugan-Rocha S."/>
            <person name="Dunkov B.C."/>
            <person name="Dunn P."/>
            <person name="Durbin K.J."/>
            <person name="Evangelista C.C."/>
            <person name="Ferraz C."/>
            <person name="Ferriera S."/>
            <person name="Fleischmann W."/>
            <person name="Fosler C."/>
            <person name="Gabrielian A.E."/>
            <person name="Garg N.S."/>
            <person name="Gelbart W.M."/>
            <person name="Glasser K."/>
            <person name="Glodek A."/>
            <person name="Gong F."/>
            <person name="Gorrell J.H."/>
            <person name="Gu Z."/>
            <person name="Guan P."/>
            <person name="Harris M."/>
            <person name="Harris N.L."/>
            <person name="Harvey D.A."/>
            <person name="Heiman T.J."/>
            <person name="Hernandez J.R."/>
            <person name="Houck J."/>
            <person name="Hostin D."/>
            <person name="Houston K.A."/>
            <person name="Howland T.J."/>
            <person name="Wei M.-H."/>
            <person name="Ibegwam C."/>
            <person name="Jalali M."/>
            <person name="Kalush F."/>
            <person name="Karpen G.H."/>
            <person name="Ke Z."/>
            <person name="Kennison J.A."/>
            <person name="Ketchum K.A."/>
            <person name="Kimmel B.E."/>
            <person name="Kodira C.D."/>
            <person name="Kraft C.L."/>
            <person name="Kravitz S."/>
            <person name="Kulp D."/>
            <person name="Lai Z."/>
            <person name="Lasko P."/>
            <person name="Lei Y."/>
            <person name="Levitsky A.A."/>
            <person name="Li J.H."/>
            <person name="Li Z."/>
            <person name="Liang Y."/>
            <person name="Lin X."/>
            <person name="Liu X."/>
            <person name="Mattei B."/>
            <person name="McIntosh T.C."/>
            <person name="McLeod M.P."/>
            <person name="McPherson D."/>
            <person name="Merkulov G."/>
            <person name="Milshina N.V."/>
            <person name="Mobarry C."/>
            <person name="Morris J."/>
            <person name="Moshrefi A."/>
            <person name="Mount S.M."/>
            <person name="Moy M."/>
            <person name="Murphy B."/>
            <person name="Murphy L."/>
            <person name="Muzny D.M."/>
            <person name="Nelson D.L."/>
            <person name="Nelson D.R."/>
            <person name="Nelson K.A."/>
            <person name="Nixon K."/>
            <person name="Nusskern D.R."/>
            <person name="Pacleb J.M."/>
            <person name="Palazzolo M."/>
            <person name="Pittman G.S."/>
            <person name="Pan S."/>
            <person name="Pollard J."/>
            <person name="Puri V."/>
            <person name="Reese M.G."/>
            <person name="Reinert K."/>
            <person name="Remington K."/>
            <person name="Saunders R.D.C."/>
            <person name="Scheeler F."/>
            <person name="Shen H."/>
            <person name="Shue B.C."/>
            <person name="Siden-Kiamos I."/>
            <person name="Simpson M."/>
            <person name="Skupski M.P."/>
            <person name="Smith T.J."/>
            <person name="Spier E."/>
            <person name="Spradling A.C."/>
            <person name="Stapleton M."/>
            <person name="Strong R."/>
            <person name="Sun E."/>
            <person name="Svirskas R."/>
            <person name="Tector C."/>
            <person name="Turner R."/>
            <person name="Venter E."/>
            <person name="Wang A.H."/>
            <person name="Wang X."/>
            <person name="Wang Z.-Y."/>
            <person name="Wassarman D.A."/>
            <person name="Weinstock G.M."/>
            <person name="Weissenbach J."/>
            <person name="Williams S.M."/>
            <person name="Woodage T."/>
            <person name="Worley K.C."/>
            <person name="Wu D."/>
            <person name="Yang S."/>
            <person name="Yao Q.A."/>
            <person name="Ye J."/>
            <person name="Yeh R.-F."/>
            <person name="Zaveri J.S."/>
            <person name="Zhan M."/>
            <person name="Zhang G."/>
            <person name="Zhao Q."/>
            <person name="Zheng L."/>
            <person name="Zheng X.H."/>
            <person name="Zhong F.N."/>
            <person name="Zhong W."/>
            <person name="Zhou X."/>
            <person name="Zhu S.C."/>
            <person name="Zhu X."/>
            <person name="Smith H.O."/>
            <person name="Gibbs R.A."/>
            <person name="Myers E.W."/>
            <person name="Rubin G.M."/>
            <person name="Venter J.C."/>
        </authorList>
    </citation>
    <scope>NUCLEOTIDE SEQUENCE [LARGE SCALE GENOMIC DNA]</scope>
    <source>
        <strain evidence="11">Berkeley</strain>
    </source>
</reference>
<reference evidence="11" key="2">
    <citation type="journal article" date="2002" name="Genome Biol.">
        <title>Annotation of the Drosophila melanogaster euchromatic genome: a systematic review.</title>
        <authorList>
            <person name="Misra S."/>
            <person name="Crosby M.A."/>
            <person name="Mungall C.J."/>
            <person name="Matthews B.B."/>
            <person name="Campbell K.S."/>
            <person name="Hradecky P."/>
            <person name="Huang Y."/>
            <person name="Kaminker J.S."/>
            <person name="Millburn G.H."/>
            <person name="Prochnik S.E."/>
            <person name="Smith C.D."/>
            <person name="Tupy J.L."/>
            <person name="Whitfield E.J."/>
            <person name="Bayraktaroglu L."/>
            <person name="Berman B.P."/>
            <person name="Bettencourt B.R."/>
            <person name="Celniker S.E."/>
            <person name="de Grey A.D.N.J."/>
            <person name="Drysdale R.A."/>
            <person name="Harris N.L."/>
            <person name="Richter J."/>
            <person name="Russo S."/>
            <person name="Schroeder A.J."/>
            <person name="Shu S.Q."/>
            <person name="Stapleton M."/>
            <person name="Yamada C."/>
            <person name="Ashburner M."/>
            <person name="Gelbart W.M."/>
            <person name="Rubin G.M."/>
            <person name="Lewis S.E."/>
        </authorList>
    </citation>
    <scope>GENOME REANNOTATION</scope>
    <source>
        <strain evidence="11">Berkeley</strain>
    </source>
</reference>
<reference evidence="8" key="3">
    <citation type="journal article" date="2002" name="Genome Biol.">
        <title>A Drosophila full-length cDNA resource.</title>
        <authorList>
            <person name="Stapleton M."/>
            <person name="Carlson J.W."/>
            <person name="Brokstein P."/>
            <person name="Yu C."/>
            <person name="Champe M."/>
            <person name="George R.A."/>
            <person name="Guarin H."/>
            <person name="Kronmiller B."/>
            <person name="Pacleb J.M."/>
            <person name="Park S."/>
            <person name="Wan K.H."/>
            <person name="Rubin G.M."/>
            <person name="Celniker S.E."/>
        </authorList>
    </citation>
    <scope>NUCLEOTIDE SEQUENCE [LARGE SCALE MRNA] (ISOFORM A)</scope>
    <source>
        <strain evidence="8">Berkeley</strain>
        <tissue evidence="8">Head</tissue>
    </source>
</reference>
<reference evidence="9" key="4">
    <citation type="submission" date="2010-11" db="EMBL/GenBank/DDBJ databases">
        <authorList>
            <person name="Carlson J."/>
            <person name="Booth B."/>
            <person name="Frise E."/>
            <person name="Park S."/>
            <person name="Wan K."/>
            <person name="Yu C."/>
            <person name="Celniker S."/>
        </authorList>
    </citation>
    <scope>NUCLEOTIDE SEQUENCE [LARGE SCALE MRNA] (ISOFORM B)</scope>
    <source>
        <strain evidence="9">Berkeley</strain>
        <tissue evidence="9">Head</tissue>
    </source>
</reference>
<reference evidence="7" key="5">
    <citation type="journal article" date="2000" name="J. Biol. Chem.">
        <title>Interaction of Drosophila melanogaster prohormone convertase 2 and 7B2. Insect cell-specific processing and secretion.</title>
        <authorList>
            <person name="Hwang J.R."/>
            <person name="Siekhaus D.E."/>
            <person name="Fuller R.S."/>
            <person name="Taghert P.H."/>
            <person name="Lindberg I."/>
        </authorList>
    </citation>
    <scope>NUCLEOTIDE SEQUENCE [GENOMIC DNA] OF 16-276</scope>
    <scope>FUNCTION</scope>
</reference>